<evidence type="ECO:0000269" key="1">
    <source>
    </source>
</evidence>
<evidence type="ECO:0000269" key="2">
    <source>
    </source>
</evidence>
<evidence type="ECO:0000303" key="3">
    <source>
    </source>
</evidence>
<evidence type="ECO:0000305" key="4"/>
<evidence type="ECO:0007829" key="5">
    <source>
        <dbReference type="PDB" id="3O3M"/>
    </source>
</evidence>
<keyword id="KW-0002">3D-structure</keyword>
<keyword id="KW-0004">4Fe-4S</keyword>
<keyword id="KW-0903">Direct protein sequencing</keyword>
<keyword id="KW-0408">Iron</keyword>
<keyword id="KW-0411">Iron-sulfur</keyword>
<keyword id="KW-0456">Lyase</keyword>
<keyword id="KW-0479">Metal-binding</keyword>
<keyword id="KW-0614">Plasmid</keyword>
<dbReference type="EC" id="4.2.1.157" evidence="1"/>
<dbReference type="EMBL" id="AY772816">
    <property type="protein sequence ID" value="AAV40819.1"/>
    <property type="molecule type" value="Genomic_DNA"/>
</dbReference>
<dbReference type="EMBL" id="LN614756">
    <property type="protein sequence ID" value="CEJ96915.1"/>
    <property type="molecule type" value="Genomic_DNA"/>
</dbReference>
<dbReference type="EMBL" id="LN831031">
    <property type="protein sequence ID" value="CKH72398.1"/>
    <property type="molecule type" value="Genomic_DNA"/>
</dbReference>
<dbReference type="RefSeq" id="WP_009888224.1">
    <property type="nucleotide sequence ID" value="NZ_WUUI01000021.1"/>
</dbReference>
<dbReference type="PDB" id="3O3M">
    <property type="method" value="X-ray"/>
    <property type="resolution" value="1.82 A"/>
    <property type="chains" value="A/C=1-408"/>
</dbReference>
<dbReference type="PDB" id="3O3N">
    <property type="method" value="X-ray"/>
    <property type="resolution" value="2.30 A"/>
    <property type="chains" value="A/C=1-408"/>
</dbReference>
<dbReference type="PDB" id="3O3O">
    <property type="method" value="X-ray"/>
    <property type="resolution" value="2.00 A"/>
    <property type="chains" value="A=1-408"/>
</dbReference>
<dbReference type="PDBsum" id="3O3M"/>
<dbReference type="PDBsum" id="3O3N"/>
<dbReference type="PDBsum" id="3O3O"/>
<dbReference type="SMR" id="Q5U924"/>
<dbReference type="GeneID" id="66352922"/>
<dbReference type="KEGG" id="pdf:CD630DERM_03970"/>
<dbReference type="BRENDA" id="4.2.1.157">
    <property type="organism ID" value="1473"/>
</dbReference>
<dbReference type="SABIO-RK" id="Q5U924"/>
<dbReference type="EvolutionaryTrace" id="Q5U924"/>
<dbReference type="GO" id="GO:0051539">
    <property type="term" value="F:4 iron, 4 sulfur cluster binding"/>
    <property type="evidence" value="ECO:0000314"/>
    <property type="project" value="UniProtKB"/>
</dbReference>
<dbReference type="GO" id="GO:0016836">
    <property type="term" value="F:hydro-lyase activity"/>
    <property type="evidence" value="ECO:0000314"/>
    <property type="project" value="UniProtKB"/>
</dbReference>
<dbReference type="GO" id="GO:0046872">
    <property type="term" value="F:metal ion binding"/>
    <property type="evidence" value="ECO:0007669"/>
    <property type="project" value="UniProtKB-KW"/>
</dbReference>
<dbReference type="GO" id="GO:0006551">
    <property type="term" value="P:L-leucine metabolic process"/>
    <property type="evidence" value="ECO:0000314"/>
    <property type="project" value="UniProtKB"/>
</dbReference>
<dbReference type="Gene3D" id="3.40.50.11890">
    <property type="match status" value="1"/>
</dbReference>
<dbReference type="Gene3D" id="3.40.50.11900">
    <property type="match status" value="1"/>
</dbReference>
<dbReference type="InterPro" id="IPR010327">
    <property type="entry name" value="FldB/FldC_alpha/beta"/>
</dbReference>
<dbReference type="PANTHER" id="PTHR30548">
    <property type="entry name" value="2-HYDROXYGLUTARYL-COA DEHYDRATASE, D-COMPONENT-RELATED"/>
    <property type="match status" value="1"/>
</dbReference>
<dbReference type="PANTHER" id="PTHR30548:SF4">
    <property type="entry name" value="SUBUNIT OF OXYGEN-SENSITIVE 2-HYDROXYISOCAPROYL-COA DEHYDRATASE"/>
    <property type="match status" value="1"/>
</dbReference>
<dbReference type="Pfam" id="PF06050">
    <property type="entry name" value="HGD-D"/>
    <property type="match status" value="1"/>
</dbReference>
<reference key="1">
    <citation type="journal article" date="2005" name="FEBS J.">
        <title>2-hydroxyisocaproyl-CoA dehydratase and its activator from Clostridium difficile.</title>
        <authorList>
            <person name="Kim J."/>
            <person name="Darley D."/>
            <person name="Buckel W."/>
        </authorList>
    </citation>
    <scope>NUCLEOTIDE SEQUENCE [GENOMIC DNA]</scope>
    <scope>PROTEIN SEQUENCE OF 2-11</scope>
    <scope>FUNCTION</scope>
    <scope>CATALYTIC ACTIVITY</scope>
    <scope>BIOPHYSICOCHEMICAL PROPERTIES</scope>
    <scope>ACTIVITY REGULATION</scope>
    <scope>COFACTOR</scope>
    <scope>SUBUNIT</scope>
    <scope>REACTION MECHANISM</scope>
    <source>
        <strain>ATCC 9689 / DSM 1296 / BCRC 10642 / JCM 1296 / NCIMB 10666 / NCTC 11209 / 90556-M6S</strain>
    </source>
</reference>
<reference key="2">
    <citation type="submission" date="2014-09" db="EMBL/GenBank/DDBJ databases">
        <authorList>
            <person name="Magalhaes I.L.F."/>
            <person name="Oliveira U."/>
            <person name="Santos F.R."/>
            <person name="Vidigal T.H.D.A."/>
            <person name="Brescovit A.D."/>
            <person name="Santos A.J."/>
        </authorList>
    </citation>
    <scope>NUCLEOTIDE SEQUENCE [GENOMIC DNA]</scope>
    <source>
        <strain>630Derm</strain>
    </source>
</reference>
<reference key="3">
    <citation type="journal article" date="2011" name="J. Am. Chem. Soc.">
        <title>Structural basis for reductive radical formation and electron recycling in (R)-2-hydroxyisocaproyl-CoA dehydratase.</title>
        <authorList>
            <person name="Knauer S.H."/>
            <person name="Buckel W."/>
            <person name="Dobbek H."/>
        </authorList>
    </citation>
    <scope>X-RAY CRYSTALLOGRAPHY (1.82 ANGSTROMS) IN COMPLEX WITH IRON-SULFUR (4FE-4S) AND SUBSTRATE ANALOG</scope>
    <scope>FUNCTION</scope>
    <scope>COFACTOR</scope>
    <scope>SUBUNIT</scope>
    <scope>REACTION MECHANISM</scope>
    <source>
        <plasmid>2</plasmid>
    </source>
</reference>
<name>HADB_CLODI</name>
<gene>
    <name evidence="3" type="primary">hadB</name>
    <name type="ORF">CD630DERM_03970</name>
    <name type="ORF">ERS445050_03310</name>
</gene>
<feature type="initiator methionine" description="Removed" evidence="1">
    <location>
        <position position="1"/>
    </location>
</feature>
<feature type="chain" id="PRO_0000435662" description="(R)-2-hydroxyisocaproyl-CoA dehydratase alpha subunit">
    <location>
        <begin position="2"/>
        <end position="408"/>
    </location>
</feature>
<feature type="binding site" evidence="2">
    <location>
        <position position="55"/>
    </location>
    <ligand>
        <name>substrate</name>
    </ligand>
</feature>
<feature type="binding site" evidence="2">
    <location>
        <position position="84"/>
    </location>
    <ligand>
        <name>[4Fe-4S] cluster</name>
        <dbReference type="ChEBI" id="CHEBI:49883"/>
    </ligand>
</feature>
<feature type="binding site" evidence="2">
    <location>
        <position position="117"/>
    </location>
    <ligand>
        <name>[4Fe-4S] cluster</name>
        <dbReference type="ChEBI" id="CHEBI:49883"/>
    </ligand>
</feature>
<feature type="binding site" evidence="2">
    <location>
        <position position="346"/>
    </location>
    <ligand>
        <name>[4Fe-4S] cluster</name>
        <dbReference type="ChEBI" id="CHEBI:49883"/>
    </ligand>
</feature>
<feature type="helix" evidence="5">
    <location>
        <begin position="7"/>
        <end position="28"/>
    </location>
</feature>
<feature type="strand" evidence="5">
    <location>
        <begin position="32"/>
        <end position="35"/>
    </location>
</feature>
<feature type="helix" evidence="5">
    <location>
        <begin position="42"/>
        <end position="45"/>
    </location>
</feature>
<feature type="turn" evidence="5">
    <location>
        <begin position="46"/>
        <end position="48"/>
    </location>
</feature>
<feature type="strand" evidence="5">
    <location>
        <begin position="50"/>
        <end position="52"/>
    </location>
</feature>
<feature type="helix" evidence="5">
    <location>
        <begin position="54"/>
        <end position="63"/>
    </location>
</feature>
<feature type="helix" evidence="5">
    <location>
        <begin position="67"/>
        <end position="76"/>
    </location>
</feature>
<feature type="helix" evidence="5">
    <location>
        <begin position="85"/>
        <end position="96"/>
    </location>
</feature>
<feature type="strand" evidence="5">
    <location>
        <begin position="100"/>
        <end position="102"/>
    </location>
</feature>
<feature type="strand" evidence="5">
    <location>
        <begin position="108"/>
        <end position="113"/>
    </location>
</feature>
<feature type="helix" evidence="5">
    <location>
        <begin position="119"/>
        <end position="131"/>
    </location>
</feature>
<feature type="strand" evidence="5">
    <location>
        <begin position="135"/>
        <end position="138"/>
    </location>
</feature>
<feature type="strand" evidence="5">
    <location>
        <begin position="145"/>
        <end position="147"/>
    </location>
</feature>
<feature type="helix" evidence="5">
    <location>
        <begin position="150"/>
        <end position="171"/>
    </location>
</feature>
<feature type="helix" evidence="5">
    <location>
        <begin position="177"/>
        <end position="197"/>
    </location>
</feature>
<feature type="turn" evidence="5">
    <location>
        <begin position="198"/>
        <end position="203"/>
    </location>
</feature>
<feature type="helix" evidence="5">
    <location>
        <begin position="211"/>
        <end position="213"/>
    </location>
</feature>
<feature type="helix" evidence="5">
    <location>
        <begin position="214"/>
        <end position="223"/>
    </location>
</feature>
<feature type="helix" evidence="5">
    <location>
        <begin position="228"/>
        <end position="246"/>
    </location>
</feature>
<feature type="strand" evidence="5">
    <location>
        <begin position="258"/>
        <end position="264"/>
    </location>
</feature>
<feature type="helix" evidence="5">
    <location>
        <begin position="268"/>
        <end position="270"/>
    </location>
</feature>
<feature type="helix" evidence="5">
    <location>
        <begin position="271"/>
        <end position="280"/>
    </location>
</feature>
<feature type="strand" evidence="5">
    <location>
        <begin position="283"/>
        <end position="287"/>
    </location>
</feature>
<feature type="helix" evidence="5">
    <location>
        <begin position="290"/>
        <end position="292"/>
    </location>
</feature>
<feature type="turn" evidence="5">
    <location>
        <begin position="293"/>
        <end position="295"/>
    </location>
</feature>
<feature type="helix" evidence="5">
    <location>
        <begin position="303"/>
        <end position="311"/>
    </location>
</feature>
<feature type="helix" evidence="5">
    <location>
        <begin position="314"/>
        <end position="316"/>
    </location>
</feature>
<feature type="helix" evidence="5">
    <location>
        <begin position="319"/>
        <end position="332"/>
    </location>
</feature>
<feature type="strand" evidence="5">
    <location>
        <begin position="336"/>
        <end position="345"/>
    </location>
</feature>
<feature type="helix" evidence="5">
    <location>
        <begin position="347"/>
        <end position="350"/>
    </location>
</feature>
<feature type="helix" evidence="5">
    <location>
        <begin position="353"/>
        <end position="364"/>
    </location>
</feature>
<feature type="strand" evidence="5">
    <location>
        <begin position="368"/>
        <end position="373"/>
    </location>
</feature>
<feature type="helix" evidence="5">
    <location>
        <begin position="378"/>
        <end position="380"/>
    </location>
</feature>
<feature type="helix" evidence="5">
    <location>
        <begin position="383"/>
        <end position="401"/>
    </location>
</feature>
<organism>
    <name type="scientific">Clostridioides difficile</name>
    <name type="common">Peptoclostridium difficile</name>
    <dbReference type="NCBI Taxonomy" id="1496"/>
    <lineage>
        <taxon>Bacteria</taxon>
        <taxon>Bacillati</taxon>
        <taxon>Bacillota</taxon>
        <taxon>Clostridia</taxon>
        <taxon>Peptostreptococcales</taxon>
        <taxon>Peptostreptococcaceae</taxon>
        <taxon>Clostridioides</taxon>
    </lineage>
</organism>
<accession>Q5U924</accession>
<geneLocation type="plasmid">
    <name>2</name>
</geneLocation>
<comment type="function">
    <text evidence="1 2">Involved in the reductive branch of L-leucine fermentation. Catalyzes the irreversible beta/alpha-elimination of water from (R)-2-hydroxyisocaproyl-CoA to yield isocaprenoyl-CoA. This beta/alpha-dehydration depends on the reductive formation of ketyl radicals on the substrate generated by injection of a single electron from the ATP-dependent activator protein HadI. The enzyme is specific for the R-isomer.</text>
</comment>
<comment type="catalytic activity">
    <reaction evidence="1">
        <text>(R)-2-hydroxy-4-methylpentanoyl-CoA = 4-methylpent-2-enoyl-CoA + H2O</text>
        <dbReference type="Rhea" id="RHEA:46924"/>
        <dbReference type="ChEBI" id="CHEBI:15377"/>
        <dbReference type="ChEBI" id="CHEBI:87119"/>
        <dbReference type="ChEBI" id="CHEBI:87120"/>
        <dbReference type="EC" id="4.2.1.157"/>
    </reaction>
</comment>
<comment type="cofactor">
    <cofactor evidence="1 2">
        <name>[4Fe-4S] cluster</name>
        <dbReference type="ChEBI" id="CHEBI:49883"/>
    </cofactor>
    <text evidence="1 2">Binds 1 [4Fe-4S] cluster.</text>
</comment>
<comment type="activity regulation">
    <text evidence="1">Activated by HadI.</text>
</comment>
<comment type="biophysicochemical properties">
    <kinetics>
        <KM evidence="1">0.05 mM for (R)-2-hydroxyisocaproyl-CoA</KM>
    </kinetics>
</comment>
<comment type="subunit">
    <text evidence="1 2">Part of the heterodimeric complex HadBC composed of (R)-2-hydroxyisocaproyl-CoA dehydratase alpha (HadB) and beta (HadC) subunit.</text>
</comment>
<comment type="similarity">
    <text evidence="4">Belongs to the FldB/FldC dehydratase alpha/beta subunit family.</text>
</comment>
<protein>
    <recommendedName>
        <fullName evidence="3">(R)-2-hydroxyisocaproyl-CoA dehydratase alpha subunit</fullName>
        <ecNumber evidence="1">4.2.1.157</ecNumber>
    </recommendedName>
</protein>
<sequence>MSEKKEARVVINDLLAEQYANAFKAKEEGRPVGWSTSVFPQELAEVFDLNVLYPENQAAGVAAKKGSLELCEIAESKGYSIDLCAYARTNFGLLENGGCEALDMPAPDFLLCCNNICNQVIKWYENISRELDIPLIMIDTTFNNEDEVTQSRIDYIKAQFEEAIKQLEIISGKKFDPKKFEEVMKISAENGRLWKYSMSLPADSSPSPMNGFDLFTYMAVIVCARGKKETTEAFKLLIEELEDNMKTGKSSFRGEEKYRIMMEGIPCWPYIGYKMKTLAKFGVNMTGSVYPHAWALQYEVNDLDGMAVAYSTMFNNVNLDRMTKYRVDSLVEGKCDGAFYHMNRSCKLMSLIQYEMQRRAAEETGLPYAGFDGDQADPRAFTNAQFETRIQGLVEVMEERKKLNRGEI</sequence>
<proteinExistence type="evidence at protein level"/>